<dbReference type="EMBL" id="CR936503">
    <property type="protein sequence ID" value="CAI55713.1"/>
    <property type="molecule type" value="Genomic_DNA"/>
</dbReference>
<dbReference type="RefSeq" id="WP_011375103.1">
    <property type="nucleotide sequence ID" value="NC_007576.1"/>
</dbReference>
<dbReference type="SMR" id="Q38VS0"/>
<dbReference type="STRING" id="314315.LCA_1410"/>
<dbReference type="KEGG" id="lsa:LCA_1410"/>
<dbReference type="eggNOG" id="COG0691">
    <property type="taxonomic scope" value="Bacteria"/>
</dbReference>
<dbReference type="HOGENOM" id="CLU_108953_0_0_9"/>
<dbReference type="OrthoDB" id="9805462at2"/>
<dbReference type="Proteomes" id="UP000002707">
    <property type="component" value="Chromosome"/>
</dbReference>
<dbReference type="GO" id="GO:0005829">
    <property type="term" value="C:cytosol"/>
    <property type="evidence" value="ECO:0007669"/>
    <property type="project" value="TreeGrafter"/>
</dbReference>
<dbReference type="GO" id="GO:0003723">
    <property type="term" value="F:RNA binding"/>
    <property type="evidence" value="ECO:0007669"/>
    <property type="project" value="UniProtKB-UniRule"/>
</dbReference>
<dbReference type="GO" id="GO:0070929">
    <property type="term" value="P:trans-translation"/>
    <property type="evidence" value="ECO:0007669"/>
    <property type="project" value="UniProtKB-UniRule"/>
</dbReference>
<dbReference type="CDD" id="cd09294">
    <property type="entry name" value="SmpB"/>
    <property type="match status" value="1"/>
</dbReference>
<dbReference type="Gene3D" id="2.40.280.10">
    <property type="match status" value="1"/>
</dbReference>
<dbReference type="HAMAP" id="MF_00023">
    <property type="entry name" value="SmpB"/>
    <property type="match status" value="1"/>
</dbReference>
<dbReference type="InterPro" id="IPR023620">
    <property type="entry name" value="SmpB"/>
</dbReference>
<dbReference type="InterPro" id="IPR000037">
    <property type="entry name" value="SsrA-bd_prot"/>
</dbReference>
<dbReference type="InterPro" id="IPR020081">
    <property type="entry name" value="SsrA-bd_prot_CS"/>
</dbReference>
<dbReference type="NCBIfam" id="NF003843">
    <property type="entry name" value="PRK05422.1"/>
    <property type="match status" value="1"/>
</dbReference>
<dbReference type="NCBIfam" id="TIGR00086">
    <property type="entry name" value="smpB"/>
    <property type="match status" value="1"/>
</dbReference>
<dbReference type="PANTHER" id="PTHR30308:SF2">
    <property type="entry name" value="SSRA-BINDING PROTEIN"/>
    <property type="match status" value="1"/>
</dbReference>
<dbReference type="PANTHER" id="PTHR30308">
    <property type="entry name" value="TMRNA-BINDING COMPONENT OF TRANS-TRANSLATION TAGGING COMPLEX"/>
    <property type="match status" value="1"/>
</dbReference>
<dbReference type="Pfam" id="PF01668">
    <property type="entry name" value="SmpB"/>
    <property type="match status" value="1"/>
</dbReference>
<dbReference type="SUPFAM" id="SSF74982">
    <property type="entry name" value="Small protein B (SmpB)"/>
    <property type="match status" value="1"/>
</dbReference>
<dbReference type="PROSITE" id="PS01317">
    <property type="entry name" value="SSRP"/>
    <property type="match status" value="1"/>
</dbReference>
<evidence type="ECO:0000255" key="1">
    <source>
        <dbReference type="HAMAP-Rule" id="MF_00023"/>
    </source>
</evidence>
<evidence type="ECO:0000256" key="2">
    <source>
        <dbReference type="SAM" id="MobiDB-lite"/>
    </source>
</evidence>
<feature type="chain" id="PRO_1000002075" description="SsrA-binding protein">
    <location>
        <begin position="1"/>
        <end position="156"/>
    </location>
</feature>
<feature type="region of interest" description="Disordered" evidence="2">
    <location>
        <begin position="134"/>
        <end position="156"/>
    </location>
</feature>
<organism>
    <name type="scientific">Latilactobacillus sakei subsp. sakei (strain 23K)</name>
    <name type="common">Lactobacillus sakei subsp. sakei</name>
    <dbReference type="NCBI Taxonomy" id="314315"/>
    <lineage>
        <taxon>Bacteria</taxon>
        <taxon>Bacillati</taxon>
        <taxon>Bacillota</taxon>
        <taxon>Bacilli</taxon>
        <taxon>Lactobacillales</taxon>
        <taxon>Lactobacillaceae</taxon>
        <taxon>Latilactobacillus</taxon>
    </lineage>
</organism>
<sequence length="156" mass="17905">MAKKHPQKPANLIAQNKKAGHDYNILETFEAGLVLTGTEIKSVRKGKISLRDGFARVRRGEAYLENVHISPYEQGNQFNHDPLRNRKLLLHKKEIAKIGALTKDKGITIVPLRVYLKHGFAKVLIGVGEGKREYDKRETLKRKEQDREMARALRKR</sequence>
<accession>Q38VS0</accession>
<name>SSRP_LATSS</name>
<proteinExistence type="inferred from homology"/>
<reference key="1">
    <citation type="journal article" date="2005" name="Nat. Biotechnol.">
        <title>The complete genome sequence of the meat-borne lactic acid bacterium Lactobacillus sakei 23K.</title>
        <authorList>
            <person name="Chaillou S."/>
            <person name="Champomier-Verges M.-C."/>
            <person name="Cornet M."/>
            <person name="Crutz-Le Coq A.-M."/>
            <person name="Dudez A.-M."/>
            <person name="Martin V."/>
            <person name="Beaufils S."/>
            <person name="Darbon-Rongere E."/>
            <person name="Bossy R."/>
            <person name="Loux V."/>
            <person name="Zagorec M."/>
        </authorList>
    </citation>
    <scope>NUCLEOTIDE SEQUENCE [LARGE SCALE GENOMIC DNA]</scope>
    <source>
        <strain>23K</strain>
    </source>
</reference>
<comment type="function">
    <text evidence="1">Required for rescue of stalled ribosomes mediated by trans-translation. Binds to transfer-messenger RNA (tmRNA), required for stable association of tmRNA with ribosomes. tmRNA and SmpB together mimic tRNA shape, replacing the anticodon stem-loop with SmpB. tmRNA is encoded by the ssrA gene; the 2 termini fold to resemble tRNA(Ala) and it encodes a 'tag peptide', a short internal open reading frame. During trans-translation Ala-aminoacylated tmRNA acts like a tRNA, entering the A-site of stalled ribosomes, displacing the stalled mRNA. The ribosome then switches to translate the ORF on the tmRNA; the nascent peptide is terminated with the 'tag peptide' encoded by the tmRNA and targeted for degradation. The ribosome is freed to recommence translation, which seems to be the essential function of trans-translation.</text>
</comment>
<comment type="subcellular location">
    <subcellularLocation>
        <location evidence="1">Cytoplasm</location>
    </subcellularLocation>
    <text evidence="1">The tmRNA-SmpB complex associates with stalled 70S ribosomes.</text>
</comment>
<comment type="similarity">
    <text evidence="1">Belongs to the SmpB family.</text>
</comment>
<protein>
    <recommendedName>
        <fullName evidence="1">SsrA-binding protein</fullName>
    </recommendedName>
    <alternativeName>
        <fullName evidence="1">Small protein B</fullName>
    </alternativeName>
</protein>
<keyword id="KW-0963">Cytoplasm</keyword>
<keyword id="KW-1185">Reference proteome</keyword>
<keyword id="KW-0694">RNA-binding</keyword>
<gene>
    <name evidence="1" type="primary">smpB</name>
    <name type="ordered locus">LCA_1410</name>
</gene>